<keyword id="KW-0012">Acyltransferase</keyword>
<keyword id="KW-1185">Reference proteome</keyword>
<keyword id="KW-0808">Transferase</keyword>
<protein>
    <recommendedName>
        <fullName evidence="1">Alpha-tubulin N-acetyltransferase</fullName>
        <shortName evidence="1">Alpha-TAT</shortName>
        <shortName evidence="1">TAT</shortName>
        <ecNumber evidence="1">2.3.1.108</ecNumber>
    </recommendedName>
    <alternativeName>
        <fullName evidence="1">Acetyltransferase mec-17 homolog</fullName>
    </alternativeName>
</protein>
<feature type="chain" id="PRO_0000402079" description="Alpha-tubulin N-acetyltransferase">
    <location>
        <begin position="1"/>
        <end position="184"/>
    </location>
</feature>
<feature type="domain" description="N-acetyltransferase" evidence="1">
    <location>
        <begin position="1"/>
        <end position="174"/>
    </location>
</feature>
<feature type="binding site" evidence="1">
    <location>
        <begin position="108"/>
        <end position="121"/>
    </location>
    <ligand>
        <name>acetyl-CoA</name>
        <dbReference type="ChEBI" id="CHEBI:57288"/>
    </ligand>
</feature>
<feature type="binding site" evidence="1">
    <location>
        <begin position="144"/>
        <end position="153"/>
    </location>
    <ligand>
        <name>acetyl-CoA</name>
        <dbReference type="ChEBI" id="CHEBI:57288"/>
    </ligand>
</feature>
<feature type="site" description="Crucial for catalytic activity" evidence="1">
    <location>
        <position position="50"/>
    </location>
</feature>
<accession>B3L2R5</accession>
<name>ATAT_PLAKH</name>
<comment type="function">
    <text evidence="1">Specifically acetylates 'Lys-40' in alpha-tubulin on the lumenal side of microtubules. Promotes microtubule destabilization and accelerates microtubule dynamics; this activity may be independent of acetylation activity. Acetylates alpha-tubulin with a slow enzymatic rate, due to a catalytic site that is not optimized for acetyl transfer. Enters the microtubule through each end and diffuses quickly throughout the lumen of microtubules. Acetylates only long/old microtubules because of its slow acetylation rate since it does not have time to act on dynamically unstable microtubules before the enzyme is released.</text>
</comment>
<comment type="catalytic activity">
    <reaction evidence="1">
        <text>L-lysyl-[alpha-tubulin] + acetyl-CoA = N(6)-acetyl-L-lysyl-[alpha-tubulin] + CoA + H(+)</text>
        <dbReference type="Rhea" id="RHEA:15277"/>
        <dbReference type="Rhea" id="RHEA-COMP:11278"/>
        <dbReference type="Rhea" id="RHEA-COMP:11279"/>
        <dbReference type="ChEBI" id="CHEBI:15378"/>
        <dbReference type="ChEBI" id="CHEBI:29969"/>
        <dbReference type="ChEBI" id="CHEBI:57287"/>
        <dbReference type="ChEBI" id="CHEBI:57288"/>
        <dbReference type="ChEBI" id="CHEBI:61930"/>
        <dbReference type="EC" id="2.3.1.108"/>
    </reaction>
</comment>
<comment type="similarity">
    <text evidence="1">Belongs to the acetyltransferase ATAT1 family.</text>
</comment>
<dbReference type="EC" id="2.3.1.108" evidence="1"/>
<dbReference type="EMBL" id="AM910989">
    <property type="protein sequence ID" value="CAQ39291.1"/>
    <property type="molecule type" value="Genomic_DNA"/>
</dbReference>
<dbReference type="RefSeq" id="XP_002258519.1">
    <property type="nucleotide sequence ID" value="XM_002258483.1"/>
</dbReference>
<dbReference type="SMR" id="B3L2R5"/>
<dbReference type="EnsemblProtists" id="CAQ39291">
    <property type="protein sequence ID" value="CAQ39291"/>
    <property type="gene ID" value="PKH_072200"/>
</dbReference>
<dbReference type="GeneID" id="7319972"/>
<dbReference type="KEGG" id="pkn:PKNH_0722800"/>
<dbReference type="VEuPathDB" id="PlasmoDB:PKNH_0722800"/>
<dbReference type="HOGENOM" id="CLU_025013_3_0_1"/>
<dbReference type="InParanoid" id="B3L2R5"/>
<dbReference type="OMA" id="IKQPNNF"/>
<dbReference type="OrthoDB" id="447510at2759"/>
<dbReference type="PhylomeDB" id="B3L2R5"/>
<dbReference type="Proteomes" id="UP000031513">
    <property type="component" value="Chromosome 7"/>
</dbReference>
<dbReference type="GO" id="GO:0005874">
    <property type="term" value="C:microtubule"/>
    <property type="evidence" value="ECO:0007669"/>
    <property type="project" value="InterPro"/>
</dbReference>
<dbReference type="GO" id="GO:0019799">
    <property type="term" value="F:tubulin N-acetyltransferase activity"/>
    <property type="evidence" value="ECO:0007669"/>
    <property type="project" value="UniProtKB-UniRule"/>
</dbReference>
<dbReference type="GO" id="GO:0070507">
    <property type="term" value="P:regulation of microtubule cytoskeleton organization"/>
    <property type="evidence" value="ECO:0007669"/>
    <property type="project" value="UniProtKB-UniRule"/>
</dbReference>
<dbReference type="CDD" id="cd04301">
    <property type="entry name" value="NAT_SF"/>
    <property type="match status" value="1"/>
</dbReference>
<dbReference type="Gene3D" id="3.40.630.30">
    <property type="match status" value="1"/>
</dbReference>
<dbReference type="HAMAP" id="MF_03130">
    <property type="entry name" value="mec17"/>
    <property type="match status" value="1"/>
</dbReference>
<dbReference type="InterPro" id="IPR016181">
    <property type="entry name" value="Acyl_CoA_acyltransferase"/>
</dbReference>
<dbReference type="InterPro" id="IPR038746">
    <property type="entry name" value="Atat"/>
</dbReference>
<dbReference type="InterPro" id="IPR007965">
    <property type="entry name" value="GNAT_ATAT"/>
</dbReference>
<dbReference type="PANTHER" id="PTHR12327">
    <property type="entry name" value="ALPHA-TUBULIN N-ACETYLTRANSFERASE 1"/>
    <property type="match status" value="1"/>
</dbReference>
<dbReference type="PANTHER" id="PTHR12327:SF0">
    <property type="entry name" value="ALPHA-TUBULIN N-ACETYLTRANSFERASE 1"/>
    <property type="match status" value="1"/>
</dbReference>
<dbReference type="Pfam" id="PF05301">
    <property type="entry name" value="Acetyltransf_16"/>
    <property type="match status" value="1"/>
</dbReference>
<dbReference type="SUPFAM" id="SSF55729">
    <property type="entry name" value="Acyl-CoA N-acyltransferases (Nat)"/>
    <property type="match status" value="1"/>
</dbReference>
<dbReference type="PROSITE" id="PS51730">
    <property type="entry name" value="GNAT_ATAT"/>
    <property type="match status" value="1"/>
</dbReference>
<gene>
    <name type="ORF">PKH_072200</name>
</gene>
<sequence length="184" mass="21361">MNIPPEKMHNLEIKKHSRVDLLLLRSSDFHSFRKLQRDVDEMGLLSSTEQHLSGILTTLDNITDQDNTLYCLTQEGELIGMLKIGTKRLYLYNGKDLHCRSCACLLDFYIQRNFRKRGLGLELFNFMLKDKAISPSRLCYDNPSYKLQSFLKKHFSPCALIKQPNNFVIFAEYFGEPEMGPFGQ</sequence>
<organism>
    <name type="scientific">Plasmodium knowlesi (strain H)</name>
    <dbReference type="NCBI Taxonomy" id="5851"/>
    <lineage>
        <taxon>Eukaryota</taxon>
        <taxon>Sar</taxon>
        <taxon>Alveolata</taxon>
        <taxon>Apicomplexa</taxon>
        <taxon>Aconoidasida</taxon>
        <taxon>Haemosporida</taxon>
        <taxon>Plasmodiidae</taxon>
        <taxon>Plasmodium</taxon>
        <taxon>Plasmodium (Plasmodium)</taxon>
    </lineage>
</organism>
<reference key="1">
    <citation type="journal article" date="2008" name="Nature">
        <title>The genome of the simian and human malaria parasite Plasmodium knowlesi.</title>
        <authorList>
            <person name="Pain A."/>
            <person name="Boehme U."/>
            <person name="Berry A.E."/>
            <person name="Mungall K."/>
            <person name="Finn R.D."/>
            <person name="Jackson A.P."/>
            <person name="Mourier T."/>
            <person name="Mistry J."/>
            <person name="Pasini E.M."/>
            <person name="Aslett M.A."/>
            <person name="Balasubrammaniam S."/>
            <person name="Borgwardt K."/>
            <person name="Brooks K."/>
            <person name="Carret C."/>
            <person name="Carver T.J."/>
            <person name="Cherevach I."/>
            <person name="Chillingworth T."/>
            <person name="Clark T.G."/>
            <person name="Galinski M.R."/>
            <person name="Hall N."/>
            <person name="Harper D."/>
            <person name="Harris D."/>
            <person name="Hauser H."/>
            <person name="Ivens A."/>
            <person name="Janssen C.S."/>
            <person name="Keane T."/>
            <person name="Larke N."/>
            <person name="Lapp S."/>
            <person name="Marti M."/>
            <person name="Moule S."/>
            <person name="Meyer I.M."/>
            <person name="Ormond D."/>
            <person name="Peters N."/>
            <person name="Sanders M."/>
            <person name="Sanders S."/>
            <person name="Sargeant T.J."/>
            <person name="Simmonds M."/>
            <person name="Smith F."/>
            <person name="Squares R."/>
            <person name="Thurston S."/>
            <person name="Tivey A.R."/>
            <person name="Walker D."/>
            <person name="White B."/>
            <person name="Zuiderwijk E."/>
            <person name="Churcher C."/>
            <person name="Quail M.A."/>
            <person name="Cowman A.F."/>
            <person name="Turner C.M.R."/>
            <person name="Rajandream M.A."/>
            <person name="Kocken C.H.M."/>
            <person name="Thomas A.W."/>
            <person name="Newbold C.I."/>
            <person name="Barrell B.G."/>
            <person name="Berriman M."/>
        </authorList>
    </citation>
    <scope>NUCLEOTIDE SEQUENCE [LARGE SCALE GENOMIC DNA]</scope>
    <source>
        <strain>H</strain>
    </source>
</reference>
<evidence type="ECO:0000255" key="1">
    <source>
        <dbReference type="HAMAP-Rule" id="MF_03130"/>
    </source>
</evidence>
<proteinExistence type="inferred from homology"/>